<name>DEF1_VIBVU</name>
<gene>
    <name evidence="1" type="primary">def1</name>
    <name type="ordered locus">VV1_1048</name>
</gene>
<dbReference type="EC" id="3.5.1.88" evidence="1"/>
<dbReference type="EMBL" id="AE016795">
    <property type="protein sequence ID" value="AAO09535.1"/>
    <property type="molecule type" value="Genomic_DNA"/>
</dbReference>
<dbReference type="SMR" id="Q8DDE3"/>
<dbReference type="KEGG" id="vvu:VV1_1048"/>
<dbReference type="HOGENOM" id="CLU_061901_2_1_6"/>
<dbReference type="Proteomes" id="UP000002275">
    <property type="component" value="Chromosome 1"/>
</dbReference>
<dbReference type="GO" id="GO:0046872">
    <property type="term" value="F:metal ion binding"/>
    <property type="evidence" value="ECO:0007669"/>
    <property type="project" value="UniProtKB-KW"/>
</dbReference>
<dbReference type="GO" id="GO:0042586">
    <property type="term" value="F:peptide deformylase activity"/>
    <property type="evidence" value="ECO:0007669"/>
    <property type="project" value="UniProtKB-UniRule"/>
</dbReference>
<dbReference type="GO" id="GO:0043686">
    <property type="term" value="P:co-translational protein modification"/>
    <property type="evidence" value="ECO:0007669"/>
    <property type="project" value="TreeGrafter"/>
</dbReference>
<dbReference type="GO" id="GO:0006412">
    <property type="term" value="P:translation"/>
    <property type="evidence" value="ECO:0007669"/>
    <property type="project" value="UniProtKB-UniRule"/>
</dbReference>
<dbReference type="CDD" id="cd00487">
    <property type="entry name" value="Pep_deformylase"/>
    <property type="match status" value="1"/>
</dbReference>
<dbReference type="FunFam" id="3.90.45.10:FF:000001">
    <property type="entry name" value="Peptide deformylase"/>
    <property type="match status" value="1"/>
</dbReference>
<dbReference type="Gene3D" id="3.90.45.10">
    <property type="entry name" value="Peptide deformylase"/>
    <property type="match status" value="1"/>
</dbReference>
<dbReference type="HAMAP" id="MF_00163">
    <property type="entry name" value="Pep_deformylase"/>
    <property type="match status" value="1"/>
</dbReference>
<dbReference type="InterPro" id="IPR023635">
    <property type="entry name" value="Peptide_deformylase"/>
</dbReference>
<dbReference type="InterPro" id="IPR036821">
    <property type="entry name" value="Peptide_deformylase_sf"/>
</dbReference>
<dbReference type="NCBIfam" id="TIGR00079">
    <property type="entry name" value="pept_deformyl"/>
    <property type="match status" value="1"/>
</dbReference>
<dbReference type="NCBIfam" id="NF001159">
    <property type="entry name" value="PRK00150.1-3"/>
    <property type="match status" value="1"/>
</dbReference>
<dbReference type="PANTHER" id="PTHR10458">
    <property type="entry name" value="PEPTIDE DEFORMYLASE"/>
    <property type="match status" value="1"/>
</dbReference>
<dbReference type="PANTHER" id="PTHR10458:SF21">
    <property type="entry name" value="PEPTIDE DEFORMYLASE"/>
    <property type="match status" value="1"/>
</dbReference>
<dbReference type="Pfam" id="PF01327">
    <property type="entry name" value="Pep_deformylase"/>
    <property type="match status" value="1"/>
</dbReference>
<dbReference type="PIRSF" id="PIRSF004749">
    <property type="entry name" value="Pep_def"/>
    <property type="match status" value="1"/>
</dbReference>
<dbReference type="PRINTS" id="PR01576">
    <property type="entry name" value="PDEFORMYLASE"/>
</dbReference>
<dbReference type="SUPFAM" id="SSF56420">
    <property type="entry name" value="Peptide deformylase"/>
    <property type="match status" value="1"/>
</dbReference>
<protein>
    <recommendedName>
        <fullName evidence="1">Peptide deformylase 1</fullName>
        <shortName evidence="1">PDF 1</shortName>
        <ecNumber evidence="1">3.5.1.88</ecNumber>
    </recommendedName>
    <alternativeName>
        <fullName evidence="1">Polypeptide deformylase 1</fullName>
    </alternativeName>
</protein>
<evidence type="ECO:0000255" key="1">
    <source>
        <dbReference type="HAMAP-Rule" id="MF_00163"/>
    </source>
</evidence>
<organism>
    <name type="scientific">Vibrio vulnificus (strain CMCP6)</name>
    <dbReference type="NCBI Taxonomy" id="216895"/>
    <lineage>
        <taxon>Bacteria</taxon>
        <taxon>Pseudomonadati</taxon>
        <taxon>Pseudomonadota</taxon>
        <taxon>Gammaproteobacteria</taxon>
        <taxon>Vibrionales</taxon>
        <taxon>Vibrionaceae</taxon>
        <taxon>Vibrio</taxon>
    </lineage>
</organism>
<sequence length="170" mass="19293">MSVLQVLTFPDDRLRTVAKPVEKVTPEIQKIVDDMIETMYDEEGIGLAATQVDIHQRIVVIDISESRNEPMVLINPEILEKRGEDGIEEGCLSVPGARALVPRAAEVTVKALDRDGHEFTLEADDLLAICIQHELDHLQGKLFVDYLSPLKRKRIQDKLAKIKRFNEKQR</sequence>
<keyword id="KW-0378">Hydrolase</keyword>
<keyword id="KW-0408">Iron</keyword>
<keyword id="KW-0479">Metal-binding</keyword>
<keyword id="KW-0648">Protein biosynthesis</keyword>
<reference key="1">
    <citation type="submission" date="2002-12" db="EMBL/GenBank/DDBJ databases">
        <title>Complete genome sequence of Vibrio vulnificus CMCP6.</title>
        <authorList>
            <person name="Rhee J.H."/>
            <person name="Kim S.Y."/>
            <person name="Chung S.S."/>
            <person name="Kim J.J."/>
            <person name="Moon Y.H."/>
            <person name="Jeong H."/>
            <person name="Choy H.E."/>
        </authorList>
    </citation>
    <scope>NUCLEOTIDE SEQUENCE [LARGE SCALE GENOMIC DNA]</scope>
    <source>
        <strain>CMCP6</strain>
    </source>
</reference>
<accession>Q8DDE3</accession>
<feature type="chain" id="PRO_0000082877" description="Peptide deformylase 1">
    <location>
        <begin position="1"/>
        <end position="170"/>
    </location>
</feature>
<feature type="active site" evidence="1">
    <location>
        <position position="134"/>
    </location>
</feature>
<feature type="binding site" evidence="1">
    <location>
        <position position="91"/>
    </location>
    <ligand>
        <name>Fe cation</name>
        <dbReference type="ChEBI" id="CHEBI:24875"/>
    </ligand>
</feature>
<feature type="binding site" evidence="1">
    <location>
        <position position="133"/>
    </location>
    <ligand>
        <name>Fe cation</name>
        <dbReference type="ChEBI" id="CHEBI:24875"/>
    </ligand>
</feature>
<feature type="binding site" evidence="1">
    <location>
        <position position="137"/>
    </location>
    <ligand>
        <name>Fe cation</name>
        <dbReference type="ChEBI" id="CHEBI:24875"/>
    </ligand>
</feature>
<proteinExistence type="inferred from homology"/>
<comment type="function">
    <text evidence="1">Removes the formyl group from the N-terminal Met of newly synthesized proteins. Requires at least a dipeptide for an efficient rate of reaction. N-terminal L-methionine is a prerequisite for activity but the enzyme has broad specificity at other positions.</text>
</comment>
<comment type="catalytic activity">
    <reaction evidence="1">
        <text>N-terminal N-formyl-L-methionyl-[peptide] + H2O = N-terminal L-methionyl-[peptide] + formate</text>
        <dbReference type="Rhea" id="RHEA:24420"/>
        <dbReference type="Rhea" id="RHEA-COMP:10639"/>
        <dbReference type="Rhea" id="RHEA-COMP:10640"/>
        <dbReference type="ChEBI" id="CHEBI:15377"/>
        <dbReference type="ChEBI" id="CHEBI:15740"/>
        <dbReference type="ChEBI" id="CHEBI:49298"/>
        <dbReference type="ChEBI" id="CHEBI:64731"/>
        <dbReference type="EC" id="3.5.1.88"/>
    </reaction>
</comment>
<comment type="cofactor">
    <cofactor evidence="1">
        <name>Fe(2+)</name>
        <dbReference type="ChEBI" id="CHEBI:29033"/>
    </cofactor>
    <text evidence="1">Binds 1 Fe(2+) ion.</text>
</comment>
<comment type="similarity">
    <text evidence="1">Belongs to the polypeptide deformylase family.</text>
</comment>